<organism>
    <name type="scientific">Cladonia grayi</name>
    <name type="common">Gray's cup lichen</name>
    <dbReference type="NCBI Taxonomy" id="27339"/>
    <lineage>
        <taxon>Eukaryota</taxon>
        <taxon>Fungi</taxon>
        <taxon>Dikarya</taxon>
        <taxon>Ascomycota</taxon>
        <taxon>Pezizomycotina</taxon>
        <taxon>Lecanoromycetes</taxon>
        <taxon>OSLEUM clade</taxon>
        <taxon>Lecanoromycetidae</taxon>
        <taxon>Lecanorales</taxon>
        <taxon>Lecanorineae</taxon>
        <taxon>Cladoniaceae</taxon>
        <taxon>Cladonia</taxon>
    </lineage>
</organism>
<reference key="1">
    <citation type="journal article" date="2011" name="Mycologia">
        <title>Insights from the first putative biosynthetic gene cluster for a lichen depside and depsidone.</title>
        <authorList>
            <person name="Armaleo D."/>
            <person name="Sun X."/>
            <person name="Culberson C."/>
        </authorList>
    </citation>
    <scope>NUCLEOTIDE SEQUENCE [GENOMIC DNA]</scope>
    <scope>FUNCTION</scope>
</reference>
<reference key="2">
    <citation type="journal article" date="1992" name="Exp. Mycol.">
        <title>Induction of a complete secondary-product pathway in a cultured lichen fungus.</title>
        <authorList>
            <person name="Culberson C."/>
            <person name="Armaleo D."/>
        </authorList>
    </citation>
    <scope>FUNCTION</scope>
</reference>
<proteinExistence type="inferred from homology"/>
<protein>
    <recommendedName>
        <fullName evidence="3">Grayanic acid biosynthesis cluster O-methyltransferase</fullName>
        <ecNumber evidence="5">2.1.1.-</ecNumber>
    </recommendedName>
</protein>
<comment type="function">
    <text evidence="2 5 6">Non-reducing polyketide synthase; part of the gene cluster that mediates the biosynthesis of orcinol depsidone grayanic acid (GRA), the only major secondary metabolite known in C.grayi (PubMed:21289108). The first step consists in the ring and depside synthesis by PKS16 leading to 4-O-demethylsphaerophorin, involving different orcinol-like rings, one with acetyl CoA and the other with octanoyl CoA as the starter (Probable). Further depsidone formation by the GRA cluster-specific cytochrome P450 leads to 4-O-demethylgrayanic acid (Probable). Finally, the cluster specific O-methyltransferase probably converts the 4-O-demethylgrayanic acid into grayanic acid (Probable).</text>
</comment>
<comment type="pathway">
    <text evidence="5">Secondary metabolite biosynthesis.</text>
</comment>
<comment type="similarity">
    <text evidence="4">Belongs to the class I-like SAM-binding methyltransferase superfamily. Cation-independent O-methyltransferase family. COMT subfamily.</text>
</comment>
<dbReference type="EC" id="2.1.1.-" evidence="5"/>
<dbReference type="EMBL" id="GU930713">
    <property type="protein sequence ID" value="ADM79461.1"/>
    <property type="molecule type" value="Genomic_DNA"/>
</dbReference>
<dbReference type="BioCyc" id="MetaCyc:MONOMER-21841"/>
<dbReference type="GO" id="GO:0008171">
    <property type="term" value="F:O-methyltransferase activity"/>
    <property type="evidence" value="ECO:0007669"/>
    <property type="project" value="InterPro"/>
</dbReference>
<dbReference type="GO" id="GO:0032259">
    <property type="term" value="P:methylation"/>
    <property type="evidence" value="ECO:0007669"/>
    <property type="project" value="UniProtKB-KW"/>
</dbReference>
<dbReference type="GO" id="GO:0044550">
    <property type="term" value="P:secondary metabolite biosynthetic process"/>
    <property type="evidence" value="ECO:0007669"/>
    <property type="project" value="UniProtKB-ARBA"/>
</dbReference>
<dbReference type="CDD" id="cd02440">
    <property type="entry name" value="AdoMet_MTases"/>
    <property type="match status" value="1"/>
</dbReference>
<dbReference type="Gene3D" id="3.40.50.150">
    <property type="entry name" value="Vaccinia Virus protein VP39"/>
    <property type="match status" value="1"/>
</dbReference>
<dbReference type="Gene3D" id="1.10.10.10">
    <property type="entry name" value="Winged helix-like DNA-binding domain superfamily/Winged helix DNA-binding domain"/>
    <property type="match status" value="1"/>
</dbReference>
<dbReference type="InterPro" id="IPR016461">
    <property type="entry name" value="COMT-like"/>
</dbReference>
<dbReference type="InterPro" id="IPR001077">
    <property type="entry name" value="O_MeTrfase_dom"/>
</dbReference>
<dbReference type="InterPro" id="IPR029063">
    <property type="entry name" value="SAM-dependent_MTases_sf"/>
</dbReference>
<dbReference type="InterPro" id="IPR036388">
    <property type="entry name" value="WH-like_DNA-bd_sf"/>
</dbReference>
<dbReference type="PANTHER" id="PTHR43712">
    <property type="entry name" value="PUTATIVE (AFU_ORTHOLOGUE AFUA_4G14580)-RELATED"/>
    <property type="match status" value="1"/>
</dbReference>
<dbReference type="PANTHER" id="PTHR43712:SF12">
    <property type="entry name" value="STERIGMATOCYSTIN 8-O-METHYLTRANSFERASE"/>
    <property type="match status" value="1"/>
</dbReference>
<dbReference type="Pfam" id="PF00891">
    <property type="entry name" value="Methyltransf_2"/>
    <property type="match status" value="1"/>
</dbReference>
<dbReference type="SUPFAM" id="SSF53335">
    <property type="entry name" value="S-adenosyl-L-methionine-dependent methyltransferases"/>
    <property type="match status" value="1"/>
</dbReference>
<dbReference type="PROSITE" id="PS51683">
    <property type="entry name" value="SAM_OMT_II"/>
    <property type="match status" value="1"/>
</dbReference>
<name>GRA3_CLAGR</name>
<feature type="chain" id="PRO_0000445369" description="Grayanic acid biosynthesis cluster O-methyltransferase">
    <location>
        <begin position="1"/>
        <end position="450"/>
    </location>
</feature>
<feature type="active site" description="Proton acceptor" evidence="1">
    <location>
        <position position="301"/>
    </location>
</feature>
<feature type="binding site" evidence="1">
    <location>
        <position position="254"/>
    </location>
    <ligand>
        <name>S-adenosyl-L-methionine</name>
        <dbReference type="ChEBI" id="CHEBI:59789"/>
    </ligand>
</feature>
<evidence type="ECO:0000255" key="1">
    <source>
        <dbReference type="PROSITE-ProRule" id="PRU01020"/>
    </source>
</evidence>
<evidence type="ECO:0000269" key="2">
    <source>
    </source>
</evidence>
<evidence type="ECO:0000303" key="3">
    <source>
    </source>
</evidence>
<evidence type="ECO:0000305" key="4"/>
<evidence type="ECO:0000305" key="5">
    <source>
    </source>
</evidence>
<evidence type="ECO:0000305" key="6">
    <source ref="2"/>
</evidence>
<sequence length="450" mass="50314">MISEIAKLAALVLTNTVKVDDFLQSSKLPPPTFHEDGPIDLGLSPEVEAARVAAIESSLRLHDLLXGPVELIRPTVNAXSLEAIYKYDVASKVPIHGEIPIIELAXQCKMNEPDLRRILRFAIIHHRVFQEPRKGIITHSAASRRLVEDSAARDGLGLQFDDAWQSFARGFSLAHNTDKSVFEYMEAHPEKAKRFAGAMSSFSSYRGHGPEYLARGFPWASLGTKTVVDVGGSEGKYSIALAKSFPQLKFIVQDLPAVVRAVNAKRPIPLELEDRVTFMEHDMFTEQPVSADVYMFRFVFHDWPDKYVVNILRRLIPALKPGARIIISDSILPEPNTLSELYERKIRALDMVMLSFFNSRERERDDWERVCQEVDPRFKFVDAWVPEGAALGIIEAVWQPEPTMEXPKAIESDESSSTGVXDSAKGIKGMESNGRNGXISVTCVDDVDVN</sequence>
<accession>E9KMQ4</accession>
<keyword id="KW-0489">Methyltransferase</keyword>
<keyword id="KW-0949">S-adenosyl-L-methionine</keyword>
<keyword id="KW-0808">Transferase</keyword>